<reference key="1">
    <citation type="journal article" date="2003" name="Proc. Natl. Acad. Sci. U.S.A.">
        <title>The complete genome sequence of Chromobacterium violaceum reveals remarkable and exploitable bacterial adaptability.</title>
        <authorList>
            <person name="Vasconcelos A.T.R."/>
            <person name="de Almeida D.F."/>
            <person name="Hungria M."/>
            <person name="Guimaraes C.T."/>
            <person name="Antonio R.V."/>
            <person name="Almeida F.C."/>
            <person name="de Almeida L.G.P."/>
            <person name="de Almeida R."/>
            <person name="Alves-Gomes J.A."/>
            <person name="Andrade E.M."/>
            <person name="Araripe J."/>
            <person name="de Araujo M.F.F."/>
            <person name="Astolfi-Filho S."/>
            <person name="Azevedo V."/>
            <person name="Baptista A.J."/>
            <person name="Bataus L.A.M."/>
            <person name="Batista J.S."/>
            <person name="Belo A."/>
            <person name="van den Berg C."/>
            <person name="Bogo M."/>
            <person name="Bonatto S."/>
            <person name="Bordignon J."/>
            <person name="Brigido M.M."/>
            <person name="Brito C.A."/>
            <person name="Brocchi M."/>
            <person name="Burity H.A."/>
            <person name="Camargo A.A."/>
            <person name="Cardoso D.D.P."/>
            <person name="Carneiro N.P."/>
            <person name="Carraro D.M."/>
            <person name="Carvalho C.M.B."/>
            <person name="Cascardo J.C.M."/>
            <person name="Cavada B.S."/>
            <person name="Chueire L.M.O."/>
            <person name="Creczynski-Pasa T.B."/>
            <person name="Cunha-Junior N.C."/>
            <person name="Fagundes N."/>
            <person name="Falcao C.L."/>
            <person name="Fantinatti F."/>
            <person name="Farias I.P."/>
            <person name="Felipe M.S.S."/>
            <person name="Ferrari L.P."/>
            <person name="Ferro J.A."/>
            <person name="Ferro M.I.T."/>
            <person name="Franco G.R."/>
            <person name="Freitas N.S.A."/>
            <person name="Furlan L.R."/>
            <person name="Gazzinelli R.T."/>
            <person name="Gomes E.A."/>
            <person name="Goncalves P.R."/>
            <person name="Grangeiro T.B."/>
            <person name="Grattapaglia D."/>
            <person name="Grisard E.C."/>
            <person name="Hanna E.S."/>
            <person name="Jardim S.N."/>
            <person name="Laurino J."/>
            <person name="Leoi L.C.T."/>
            <person name="Lima L.F.A."/>
            <person name="Loureiro M.F."/>
            <person name="Lyra M.C.C.P."/>
            <person name="Madeira H.M.F."/>
            <person name="Manfio G.P."/>
            <person name="Maranhao A.Q."/>
            <person name="Martins W.S."/>
            <person name="di Mauro S.M.Z."/>
            <person name="de Medeiros S.R.B."/>
            <person name="Meissner R.V."/>
            <person name="Moreira M.A.M."/>
            <person name="Nascimento F.F."/>
            <person name="Nicolas M.F."/>
            <person name="Oliveira J.G."/>
            <person name="Oliveira S.C."/>
            <person name="Paixao R.F.C."/>
            <person name="Parente J.A."/>
            <person name="Pedrosa F.O."/>
            <person name="Pena S.D.J."/>
            <person name="Pereira J.O."/>
            <person name="Pereira M."/>
            <person name="Pinto L.S.R.C."/>
            <person name="Pinto L.S."/>
            <person name="Porto J.I.R."/>
            <person name="Potrich D.P."/>
            <person name="Ramalho-Neto C.E."/>
            <person name="Reis A.M.M."/>
            <person name="Rigo L.U."/>
            <person name="Rondinelli E."/>
            <person name="Santos E.B.P."/>
            <person name="Santos F.R."/>
            <person name="Schneider M.P.C."/>
            <person name="Seuanez H.N."/>
            <person name="Silva A.M.R."/>
            <person name="da Silva A.L.C."/>
            <person name="Silva D.W."/>
            <person name="Silva R."/>
            <person name="Simoes I.C."/>
            <person name="Simon D."/>
            <person name="Soares C.M.A."/>
            <person name="Soares R.B.A."/>
            <person name="Souza E.M."/>
            <person name="Souza K.R.L."/>
            <person name="Souza R.C."/>
            <person name="Steffens M.B.R."/>
            <person name="Steindel M."/>
            <person name="Teixeira S.R."/>
            <person name="Urmenyi T."/>
            <person name="Vettore A."/>
            <person name="Wassem R."/>
            <person name="Zaha A."/>
            <person name="Simpson A.J.G."/>
        </authorList>
    </citation>
    <scope>NUCLEOTIDE SEQUENCE [LARGE SCALE GENOMIC DNA]</scope>
    <source>
        <strain>ATCC 12472 / DSM 30191 / JCM 1249 / CCUG 213 / NBRC 12614 / NCIMB 9131 / NCTC 9757 / MK</strain>
    </source>
</reference>
<feature type="chain" id="PRO_0000161892" description="23S rRNA (uracil(1939)-C(5))-methyltransferase RlmD">
    <location>
        <begin position="1"/>
        <end position="514"/>
    </location>
</feature>
<feature type="active site" description="Nucleophile" evidence="1">
    <location>
        <position position="398"/>
    </location>
</feature>
<feature type="binding site" evidence="1">
    <location>
        <position position="70"/>
    </location>
    <ligand>
        <name>[4Fe-4S] cluster</name>
        <dbReference type="ChEBI" id="CHEBI:49883"/>
    </ligand>
</feature>
<feature type="binding site" evidence="1">
    <location>
        <position position="76"/>
    </location>
    <ligand>
        <name>[4Fe-4S] cluster</name>
        <dbReference type="ChEBI" id="CHEBI:49883"/>
    </ligand>
</feature>
<feature type="binding site" evidence="1">
    <location>
        <position position="79"/>
    </location>
    <ligand>
        <name>[4Fe-4S] cluster</name>
        <dbReference type="ChEBI" id="CHEBI:49883"/>
    </ligand>
</feature>
<feature type="binding site" evidence="1">
    <location>
        <position position="158"/>
    </location>
    <ligand>
        <name>[4Fe-4S] cluster</name>
        <dbReference type="ChEBI" id="CHEBI:49883"/>
    </ligand>
</feature>
<feature type="binding site" evidence="1">
    <location>
        <position position="272"/>
    </location>
    <ligand>
        <name>S-adenosyl-L-methionine</name>
        <dbReference type="ChEBI" id="CHEBI:59789"/>
    </ligand>
</feature>
<feature type="binding site" evidence="1">
    <location>
        <position position="301"/>
    </location>
    <ligand>
        <name>S-adenosyl-L-methionine</name>
        <dbReference type="ChEBI" id="CHEBI:59789"/>
    </ligand>
</feature>
<feature type="binding site" evidence="1">
    <location>
        <position position="306"/>
    </location>
    <ligand>
        <name>S-adenosyl-L-methionine</name>
        <dbReference type="ChEBI" id="CHEBI:59789"/>
    </ligand>
</feature>
<feature type="binding site" evidence="1">
    <location>
        <position position="322"/>
    </location>
    <ligand>
        <name>S-adenosyl-L-methionine</name>
        <dbReference type="ChEBI" id="CHEBI:59789"/>
    </ligand>
</feature>
<feature type="binding site" evidence="1">
    <location>
        <position position="350"/>
    </location>
    <ligand>
        <name>S-adenosyl-L-methionine</name>
        <dbReference type="ChEBI" id="CHEBI:59789"/>
    </ligand>
</feature>
<feature type="binding site" evidence="1">
    <location>
        <position position="371"/>
    </location>
    <ligand>
        <name>S-adenosyl-L-methionine</name>
        <dbReference type="ChEBI" id="CHEBI:59789"/>
    </ligand>
</feature>
<dbReference type="EC" id="2.1.1.190" evidence="1"/>
<dbReference type="EMBL" id="AE016825">
    <property type="protein sequence ID" value="AAQ59606.1"/>
    <property type="molecule type" value="Genomic_DNA"/>
</dbReference>
<dbReference type="RefSeq" id="WP_011135483.1">
    <property type="nucleotide sequence ID" value="NC_005085.1"/>
</dbReference>
<dbReference type="SMR" id="Q7NWP9"/>
<dbReference type="STRING" id="243365.CV_1932"/>
<dbReference type="KEGG" id="cvi:CV_1932"/>
<dbReference type="eggNOG" id="COG2265">
    <property type="taxonomic scope" value="Bacteria"/>
</dbReference>
<dbReference type="HOGENOM" id="CLU_014689_8_2_4"/>
<dbReference type="OrthoDB" id="9804590at2"/>
<dbReference type="Proteomes" id="UP000001424">
    <property type="component" value="Chromosome"/>
</dbReference>
<dbReference type="GO" id="GO:0051539">
    <property type="term" value="F:4 iron, 4 sulfur cluster binding"/>
    <property type="evidence" value="ECO:0007669"/>
    <property type="project" value="UniProtKB-KW"/>
</dbReference>
<dbReference type="GO" id="GO:0005506">
    <property type="term" value="F:iron ion binding"/>
    <property type="evidence" value="ECO:0007669"/>
    <property type="project" value="UniProtKB-UniRule"/>
</dbReference>
<dbReference type="GO" id="GO:0003723">
    <property type="term" value="F:RNA binding"/>
    <property type="evidence" value="ECO:0007669"/>
    <property type="project" value="InterPro"/>
</dbReference>
<dbReference type="GO" id="GO:0070041">
    <property type="term" value="F:rRNA (uridine-C5-)-methyltransferase activity"/>
    <property type="evidence" value="ECO:0007669"/>
    <property type="project" value="UniProtKB-UniRule"/>
</dbReference>
<dbReference type="GO" id="GO:0070475">
    <property type="term" value="P:rRNA base methylation"/>
    <property type="evidence" value="ECO:0007669"/>
    <property type="project" value="TreeGrafter"/>
</dbReference>
<dbReference type="CDD" id="cd02440">
    <property type="entry name" value="AdoMet_MTases"/>
    <property type="match status" value="1"/>
</dbReference>
<dbReference type="Gene3D" id="2.40.50.1070">
    <property type="match status" value="1"/>
</dbReference>
<dbReference type="Gene3D" id="2.40.50.140">
    <property type="entry name" value="Nucleic acid-binding proteins"/>
    <property type="match status" value="1"/>
</dbReference>
<dbReference type="Gene3D" id="3.40.50.150">
    <property type="entry name" value="Vaccinia Virus protein VP39"/>
    <property type="match status" value="1"/>
</dbReference>
<dbReference type="HAMAP" id="MF_01010">
    <property type="entry name" value="23SrRNA_methyltr_RlmD"/>
    <property type="match status" value="1"/>
</dbReference>
<dbReference type="InterPro" id="IPR001566">
    <property type="entry name" value="23S_rRNA_MeTrfase_RlmD"/>
</dbReference>
<dbReference type="InterPro" id="IPR030390">
    <property type="entry name" value="MeTrfase_TrmA_AS"/>
</dbReference>
<dbReference type="InterPro" id="IPR030391">
    <property type="entry name" value="MeTrfase_TrmA_CS"/>
</dbReference>
<dbReference type="InterPro" id="IPR012340">
    <property type="entry name" value="NA-bd_OB-fold"/>
</dbReference>
<dbReference type="InterPro" id="IPR029063">
    <property type="entry name" value="SAM-dependent_MTases_sf"/>
</dbReference>
<dbReference type="InterPro" id="IPR010280">
    <property type="entry name" value="U5_MeTrfase_fam"/>
</dbReference>
<dbReference type="NCBIfam" id="NF009639">
    <property type="entry name" value="PRK13168.1"/>
    <property type="match status" value="1"/>
</dbReference>
<dbReference type="NCBIfam" id="TIGR00479">
    <property type="entry name" value="rumA"/>
    <property type="match status" value="1"/>
</dbReference>
<dbReference type="PANTHER" id="PTHR11061:SF49">
    <property type="entry name" value="23S RRNA (URACIL(1939)-C(5))-METHYLTRANSFERASE RLMD"/>
    <property type="match status" value="1"/>
</dbReference>
<dbReference type="PANTHER" id="PTHR11061">
    <property type="entry name" value="RNA M5U METHYLTRANSFERASE"/>
    <property type="match status" value="1"/>
</dbReference>
<dbReference type="Pfam" id="PF05958">
    <property type="entry name" value="tRNA_U5-meth_tr"/>
    <property type="match status" value="1"/>
</dbReference>
<dbReference type="SUPFAM" id="SSF50249">
    <property type="entry name" value="Nucleic acid-binding proteins"/>
    <property type="match status" value="1"/>
</dbReference>
<dbReference type="SUPFAM" id="SSF53335">
    <property type="entry name" value="S-adenosyl-L-methionine-dependent methyltransferases"/>
    <property type="match status" value="1"/>
</dbReference>
<dbReference type="PROSITE" id="PS51687">
    <property type="entry name" value="SAM_MT_RNA_M5U"/>
    <property type="match status" value="1"/>
</dbReference>
<dbReference type="PROSITE" id="PS01230">
    <property type="entry name" value="TRMA_1"/>
    <property type="match status" value="1"/>
</dbReference>
<dbReference type="PROSITE" id="PS01231">
    <property type="entry name" value="TRMA_2"/>
    <property type="match status" value="1"/>
</dbReference>
<sequence length="514" mass="57025">MTHPQTIALVESLDHEGRGVAHVDGKTLFIDGALPYEKVIYSSYRKKPSYENAQTSAVLKESFMRADPRCPHFGVCGGCSMQHVEFTAQVAIKQRVLEDNLKRIGKVKAERVLTPIAGPAWHYRHRARLSARMVAKKGGVLVGFHEKSSSYIAEMRECHILPKHISDLIMPLREMIATLSISQRMPQVEVAVGDKLDILVFRNMDDITDADFAILKAFSDKHGAAERPLQIWLQPKGPDTCYPIYPLDAPKLTYSMPEFAVEMPYYPTEFTQVNPQINAVMVARALKFLDPQPGERIADMFCGIGNFTLPIARSGAVVHGMEGSQPLVRRAVENATHNGLQDKVSYEMANLFDVTEESFAALGKFDKMLVDPPRDGAVQLLKAITEETAPQRIVYVSCNPSTLARDAGVLVHTKGYTLKAAGIINMFPHTAHVESVAWFEKTGPCKTRKEVEEIEALEAAEREAAKAARLAEENAEKARKAAELAEKAAAKEARRAHYFAEKARRDAEEAASDQ</sequence>
<accession>Q7NWP9</accession>
<proteinExistence type="inferred from homology"/>
<keyword id="KW-0004">4Fe-4S</keyword>
<keyword id="KW-0408">Iron</keyword>
<keyword id="KW-0411">Iron-sulfur</keyword>
<keyword id="KW-0479">Metal-binding</keyword>
<keyword id="KW-0489">Methyltransferase</keyword>
<keyword id="KW-1185">Reference proteome</keyword>
<keyword id="KW-0698">rRNA processing</keyword>
<keyword id="KW-0949">S-adenosyl-L-methionine</keyword>
<keyword id="KW-0808">Transferase</keyword>
<evidence type="ECO:0000255" key="1">
    <source>
        <dbReference type="HAMAP-Rule" id="MF_01010"/>
    </source>
</evidence>
<name>RLMD_CHRVO</name>
<gene>
    <name evidence="1" type="primary">rlmD</name>
    <name type="synonym">rumA</name>
    <name type="ordered locus">CV_1932</name>
</gene>
<organism>
    <name type="scientific">Chromobacterium violaceum (strain ATCC 12472 / DSM 30191 / JCM 1249 / CCUG 213 / NBRC 12614 / NCIMB 9131 / NCTC 9757 / MK)</name>
    <dbReference type="NCBI Taxonomy" id="243365"/>
    <lineage>
        <taxon>Bacteria</taxon>
        <taxon>Pseudomonadati</taxon>
        <taxon>Pseudomonadota</taxon>
        <taxon>Betaproteobacteria</taxon>
        <taxon>Neisseriales</taxon>
        <taxon>Chromobacteriaceae</taxon>
        <taxon>Chromobacterium</taxon>
    </lineage>
</organism>
<protein>
    <recommendedName>
        <fullName evidence="1">23S rRNA (uracil(1939)-C(5))-methyltransferase RlmD</fullName>
        <ecNumber evidence="1">2.1.1.190</ecNumber>
    </recommendedName>
    <alternativeName>
        <fullName evidence="1">23S rRNA(m5U1939)-methyltransferase</fullName>
    </alternativeName>
</protein>
<comment type="function">
    <text evidence="1">Catalyzes the formation of 5-methyl-uridine at position 1939 (m5U1939) in 23S rRNA.</text>
</comment>
<comment type="catalytic activity">
    <reaction evidence="1">
        <text>uridine(1939) in 23S rRNA + S-adenosyl-L-methionine = 5-methyluridine(1939) in 23S rRNA + S-adenosyl-L-homocysteine + H(+)</text>
        <dbReference type="Rhea" id="RHEA:42908"/>
        <dbReference type="Rhea" id="RHEA-COMP:10278"/>
        <dbReference type="Rhea" id="RHEA-COMP:10279"/>
        <dbReference type="ChEBI" id="CHEBI:15378"/>
        <dbReference type="ChEBI" id="CHEBI:57856"/>
        <dbReference type="ChEBI" id="CHEBI:59789"/>
        <dbReference type="ChEBI" id="CHEBI:65315"/>
        <dbReference type="ChEBI" id="CHEBI:74447"/>
        <dbReference type="EC" id="2.1.1.190"/>
    </reaction>
</comment>
<comment type="similarity">
    <text evidence="1">Belongs to the class I-like SAM-binding methyltransferase superfamily. RNA M5U methyltransferase family. RlmD subfamily.</text>
</comment>